<proteinExistence type="inferred from homology"/>
<dbReference type="EC" id="6.5.1.2" evidence="1"/>
<dbReference type="EMBL" id="CU928164">
    <property type="protein sequence ID" value="CAR20276.1"/>
    <property type="molecule type" value="Genomic_DNA"/>
</dbReference>
<dbReference type="RefSeq" id="WP_012602584.1">
    <property type="nucleotide sequence ID" value="NC_011750.1"/>
</dbReference>
<dbReference type="RefSeq" id="YP_002410045.1">
    <property type="nucleotide sequence ID" value="NC_011750.1"/>
</dbReference>
<dbReference type="SMR" id="B7NQ11"/>
<dbReference type="STRING" id="585057.ECIAI39_4168"/>
<dbReference type="KEGG" id="ect:ECIAI39_4168"/>
<dbReference type="PATRIC" id="fig|585057.6.peg.4318"/>
<dbReference type="HOGENOM" id="CLU_489786_0_0_6"/>
<dbReference type="Proteomes" id="UP000000749">
    <property type="component" value="Chromosome"/>
</dbReference>
<dbReference type="GO" id="GO:0003911">
    <property type="term" value="F:DNA ligase (NAD+) activity"/>
    <property type="evidence" value="ECO:0007669"/>
    <property type="project" value="UniProtKB-UniRule"/>
</dbReference>
<dbReference type="GO" id="GO:0006281">
    <property type="term" value="P:DNA repair"/>
    <property type="evidence" value="ECO:0007669"/>
    <property type="project" value="UniProtKB-KW"/>
</dbReference>
<dbReference type="GO" id="GO:0006260">
    <property type="term" value="P:DNA replication"/>
    <property type="evidence" value="ECO:0007669"/>
    <property type="project" value="UniProtKB-KW"/>
</dbReference>
<dbReference type="FunFam" id="1.10.287.610:FF:000003">
    <property type="entry name" value="DNA ligase B"/>
    <property type="match status" value="1"/>
</dbReference>
<dbReference type="FunFam" id="2.40.50.140:FF:000139">
    <property type="entry name" value="DNA ligase B"/>
    <property type="match status" value="1"/>
</dbReference>
<dbReference type="FunFam" id="3.30.470.30:FF:000007">
    <property type="entry name" value="DNA ligase B"/>
    <property type="match status" value="1"/>
</dbReference>
<dbReference type="Gene3D" id="3.30.470.30">
    <property type="entry name" value="DNA ligase/mRNA capping enzyme"/>
    <property type="match status" value="1"/>
</dbReference>
<dbReference type="Gene3D" id="1.10.287.610">
    <property type="entry name" value="Helix hairpin bin"/>
    <property type="match status" value="1"/>
</dbReference>
<dbReference type="Gene3D" id="2.40.50.140">
    <property type="entry name" value="Nucleic acid-binding proteins"/>
    <property type="match status" value="1"/>
</dbReference>
<dbReference type="HAMAP" id="MF_01587">
    <property type="entry name" value="DNA_ligase_B"/>
    <property type="match status" value="1"/>
</dbReference>
<dbReference type="InterPro" id="IPR018239">
    <property type="entry name" value="DNA_ligase_AS"/>
</dbReference>
<dbReference type="InterPro" id="IPR020923">
    <property type="entry name" value="DNA_ligase_B"/>
</dbReference>
<dbReference type="InterPro" id="IPR033136">
    <property type="entry name" value="DNA_ligase_CS"/>
</dbReference>
<dbReference type="InterPro" id="IPR013839">
    <property type="entry name" value="DNAligase_adenylation"/>
</dbReference>
<dbReference type="InterPro" id="IPR013840">
    <property type="entry name" value="DNAligase_N"/>
</dbReference>
<dbReference type="InterPro" id="IPR012340">
    <property type="entry name" value="NA-bd_OB-fold"/>
</dbReference>
<dbReference type="InterPro" id="IPR050326">
    <property type="entry name" value="NAD_dep_DNA_ligaseB"/>
</dbReference>
<dbReference type="InterPro" id="IPR004150">
    <property type="entry name" value="NAD_DNA_ligase_OB"/>
</dbReference>
<dbReference type="InterPro" id="IPR010994">
    <property type="entry name" value="RuvA_2-like"/>
</dbReference>
<dbReference type="NCBIfam" id="NF005987">
    <property type="entry name" value="PRK08097.1"/>
    <property type="match status" value="1"/>
</dbReference>
<dbReference type="PANTHER" id="PTHR47810">
    <property type="entry name" value="DNA LIGASE"/>
    <property type="match status" value="1"/>
</dbReference>
<dbReference type="PANTHER" id="PTHR47810:SF1">
    <property type="entry name" value="DNA LIGASE B"/>
    <property type="match status" value="1"/>
</dbReference>
<dbReference type="Pfam" id="PF01653">
    <property type="entry name" value="DNA_ligase_aden"/>
    <property type="match status" value="1"/>
</dbReference>
<dbReference type="Pfam" id="PF03120">
    <property type="entry name" value="DNA_ligase_OB"/>
    <property type="match status" value="1"/>
</dbReference>
<dbReference type="SMART" id="SM00532">
    <property type="entry name" value="LIGANc"/>
    <property type="match status" value="1"/>
</dbReference>
<dbReference type="SUPFAM" id="SSF56091">
    <property type="entry name" value="DNA ligase/mRNA capping enzyme, catalytic domain"/>
    <property type="match status" value="1"/>
</dbReference>
<dbReference type="SUPFAM" id="SSF50249">
    <property type="entry name" value="Nucleic acid-binding proteins"/>
    <property type="match status" value="1"/>
</dbReference>
<dbReference type="SUPFAM" id="SSF47781">
    <property type="entry name" value="RuvA domain 2-like"/>
    <property type="match status" value="1"/>
</dbReference>
<dbReference type="PROSITE" id="PS01055">
    <property type="entry name" value="DNA_LIGASE_N1"/>
    <property type="match status" value="1"/>
</dbReference>
<dbReference type="PROSITE" id="PS01056">
    <property type="entry name" value="DNA_LIGASE_N2"/>
    <property type="match status" value="1"/>
</dbReference>
<name>LIGB_ECO7I</name>
<organism>
    <name type="scientific">Escherichia coli O7:K1 (strain IAI39 / ExPEC)</name>
    <dbReference type="NCBI Taxonomy" id="585057"/>
    <lineage>
        <taxon>Bacteria</taxon>
        <taxon>Pseudomonadati</taxon>
        <taxon>Pseudomonadota</taxon>
        <taxon>Gammaproteobacteria</taxon>
        <taxon>Enterobacterales</taxon>
        <taxon>Enterobacteriaceae</taxon>
        <taxon>Escherichia</taxon>
    </lineage>
</organism>
<evidence type="ECO:0000255" key="1">
    <source>
        <dbReference type="HAMAP-Rule" id="MF_01587"/>
    </source>
</evidence>
<gene>
    <name evidence="1" type="primary">ligB</name>
    <name type="ordered locus">ECIAI39_4168</name>
</gene>
<keyword id="KW-0227">DNA damage</keyword>
<keyword id="KW-0234">DNA repair</keyword>
<keyword id="KW-0235">DNA replication</keyword>
<keyword id="KW-0436">Ligase</keyword>
<keyword id="KW-0520">NAD</keyword>
<sequence>MKVWMAILISILCWQSSAWAVCPAWSPARAQEEISRLQQQIKQWDDDYWKEGKSEVEDGVYDQLSARLTQWQRCFGNETRDAMMPPLNGAVMHPVAHTGVRKMADKNALSLWMRERSDLWVQPKVDGVAVTLVYRDGKLNKAISRGNGLKGEDWTQKVRLISAVPQTVSGPLANSTLQGEIFLKRKGHIQQQMGGINARAKVAGLMMRQGNSDTLNSLAVFVWAWPDGPQLMTDRLKELATAGFTLTQTYTRAVKNADEVAHVRNEWWKAKLPFVTDGVVVRAAKEPESRHWLPGQAEWLVAWKYQPVAQVAEVKAIQFAVGKSGKISVVASLVPVMLDDKKVQRVNIGSVRHWQEWDIAPGDQILVSLAGQGIPRIDDVVWRGAERTKPTPPENRFNSLTCYFASDVCQEQFISRLVWLGSKQVLGLDGIGEAGWRALHQTHRFEHIFSWLLLTPEQLQNTPGIAKSKSAQLWHQFNLARQQPFTRWVMAMGIPLTRAALNASDERSWSQLLFSTEQFWQQLPGTGSGRARQVIEWKENAQIKKLGSWLAAQQITGFEP</sequence>
<reference key="1">
    <citation type="journal article" date="2009" name="PLoS Genet.">
        <title>Organised genome dynamics in the Escherichia coli species results in highly diverse adaptive paths.</title>
        <authorList>
            <person name="Touchon M."/>
            <person name="Hoede C."/>
            <person name="Tenaillon O."/>
            <person name="Barbe V."/>
            <person name="Baeriswyl S."/>
            <person name="Bidet P."/>
            <person name="Bingen E."/>
            <person name="Bonacorsi S."/>
            <person name="Bouchier C."/>
            <person name="Bouvet O."/>
            <person name="Calteau A."/>
            <person name="Chiapello H."/>
            <person name="Clermont O."/>
            <person name="Cruveiller S."/>
            <person name="Danchin A."/>
            <person name="Diard M."/>
            <person name="Dossat C."/>
            <person name="Karoui M.E."/>
            <person name="Frapy E."/>
            <person name="Garry L."/>
            <person name="Ghigo J.M."/>
            <person name="Gilles A.M."/>
            <person name="Johnson J."/>
            <person name="Le Bouguenec C."/>
            <person name="Lescat M."/>
            <person name="Mangenot S."/>
            <person name="Martinez-Jehanne V."/>
            <person name="Matic I."/>
            <person name="Nassif X."/>
            <person name="Oztas S."/>
            <person name="Petit M.A."/>
            <person name="Pichon C."/>
            <person name="Rouy Z."/>
            <person name="Ruf C.S."/>
            <person name="Schneider D."/>
            <person name="Tourret J."/>
            <person name="Vacherie B."/>
            <person name="Vallenet D."/>
            <person name="Medigue C."/>
            <person name="Rocha E.P.C."/>
            <person name="Denamur E."/>
        </authorList>
    </citation>
    <scope>NUCLEOTIDE SEQUENCE [LARGE SCALE GENOMIC DNA]</scope>
    <source>
        <strain>IAI39 / ExPEC</strain>
    </source>
</reference>
<feature type="chain" id="PRO_1000147721" description="DNA ligase B">
    <location>
        <begin position="1"/>
        <end position="560"/>
    </location>
</feature>
<feature type="active site" description="N6-AMP-lysine intermediate" evidence="1">
    <location>
        <position position="124"/>
    </location>
</feature>
<comment type="function">
    <text evidence="1">Catalyzes the formation of phosphodiester linkages between 5'-phosphoryl and 3'-hydroxyl groups in double-stranded DNA using NAD as a coenzyme and as the energy source for the reaction.</text>
</comment>
<comment type="catalytic activity">
    <reaction evidence="1">
        <text>NAD(+) + (deoxyribonucleotide)n-3'-hydroxyl + 5'-phospho-(deoxyribonucleotide)m = (deoxyribonucleotide)n+m + AMP + beta-nicotinamide D-nucleotide.</text>
        <dbReference type="EC" id="6.5.1.2"/>
    </reaction>
</comment>
<comment type="similarity">
    <text evidence="1">Belongs to the NAD-dependent DNA ligase family. LigB subfamily.</text>
</comment>
<protein>
    <recommendedName>
        <fullName evidence="1">DNA ligase B</fullName>
        <ecNumber evidence="1">6.5.1.2</ecNumber>
    </recommendedName>
    <alternativeName>
        <fullName evidence="1">Polydeoxyribonucleotide synthase [NAD(+)] B</fullName>
    </alternativeName>
</protein>
<accession>B7NQ11</accession>